<keyword id="KW-0053">Apoptosis</keyword>
<keyword id="KW-1003">Cell membrane</keyword>
<keyword id="KW-0202">Cytokine</keyword>
<keyword id="KW-0968">Cytoplasmic vesicle</keyword>
<keyword id="KW-1015">Disulfide bond</keyword>
<keyword id="KW-0325">Glycoprotein</keyword>
<keyword id="KW-0458">Lysosome</keyword>
<keyword id="KW-0472">Membrane</keyword>
<keyword id="KW-0539">Nucleus</keyword>
<keyword id="KW-1185">Reference proteome</keyword>
<keyword id="KW-0678">Repressor</keyword>
<keyword id="KW-0964">Secreted</keyword>
<keyword id="KW-0735">Signal-anchor</keyword>
<keyword id="KW-0804">Transcription</keyword>
<keyword id="KW-0805">Transcription regulation</keyword>
<keyword id="KW-0812">Transmembrane</keyword>
<keyword id="KW-1133">Transmembrane helix</keyword>
<keyword id="KW-0832">Ubl conjugation</keyword>
<evidence type="ECO:0000250" key="1"/>
<evidence type="ECO:0000250" key="2">
    <source>
        <dbReference type="UniProtKB" id="P41047"/>
    </source>
</evidence>
<evidence type="ECO:0000250" key="3">
    <source>
        <dbReference type="UniProtKB" id="P48023"/>
    </source>
</evidence>
<evidence type="ECO:0000255" key="4"/>
<evidence type="ECO:0000255" key="5">
    <source>
        <dbReference type="PROSITE-ProRule" id="PRU01387"/>
    </source>
</evidence>
<evidence type="ECO:0000256" key="6">
    <source>
        <dbReference type="SAM" id="MobiDB-lite"/>
    </source>
</evidence>
<evidence type="ECO:0000305" key="7"/>
<reference key="1">
    <citation type="journal article" date="2003" name="J. Immunol. Methods">
        <title>Molecular cloning, functional characterization, and enzyme-linked immunosorbent assay of cynomolgus monkey Fas ligand.</title>
        <authorList>
            <person name="Kirii Y."/>
            <person name="Inoue T."/>
            <person name="Yoshino K."/>
            <person name="Kayagaki N."/>
            <person name="Yagita H."/>
            <person name="Okumura K."/>
            <person name="Shibata H."/>
            <person name="Yoshikawa Y."/>
            <person name="Terao K."/>
        </authorList>
    </citation>
    <scope>NUCLEOTIDE SEQUENCE [MRNA]</scope>
</reference>
<organism>
    <name type="scientific">Macaca fascicularis</name>
    <name type="common">Crab-eating macaque</name>
    <name type="synonym">Cynomolgus monkey</name>
    <dbReference type="NCBI Taxonomy" id="9541"/>
    <lineage>
        <taxon>Eukaryota</taxon>
        <taxon>Metazoa</taxon>
        <taxon>Chordata</taxon>
        <taxon>Craniata</taxon>
        <taxon>Vertebrata</taxon>
        <taxon>Euteleostomi</taxon>
        <taxon>Mammalia</taxon>
        <taxon>Eutheria</taxon>
        <taxon>Euarchontoglires</taxon>
        <taxon>Primates</taxon>
        <taxon>Haplorrhini</taxon>
        <taxon>Catarrhini</taxon>
        <taxon>Cercopithecidae</taxon>
        <taxon>Cercopithecinae</taxon>
        <taxon>Macaca</taxon>
    </lineage>
</organism>
<sequence>MQQPFNYPYPQIYWVDSSASSPWAPPGTVLPCPTSVPRRPGQRRPPPPPPPPPLPPPPPSPLPPLPLPPLKKRGNHSTGLCLLVMFFMVLVALVGLGLGMFQLFHLQKELAELRESTSQKHTASSLEKQIGHPSPPPEKKEQRKVAHLTGKPNSRSMPLEWEDTYGIVLLSGVKYKKGGLVINETGLYFVYSKVYFRGQSCTNLPLSHKVYMRNSKYPQDLVMMEGKMMSYCTTGQMWAHSSYLGAVFNLTSADHLYVNVSELSLVNFEESQTFFGLYKL</sequence>
<feature type="chain" id="PRO_0000034502" description="Tumor necrosis factor ligand superfamily member 6, membrane form">
    <location>
        <begin position="1"/>
        <end position="280"/>
    </location>
</feature>
<feature type="chain" id="PRO_0000417153" description="ADAM10-processed FasL form" evidence="1">
    <location>
        <begin position="1"/>
        <end position="128"/>
    </location>
</feature>
<feature type="chain" id="PRO_0000417154" description="FasL intracellular domain" evidence="1">
    <location>
        <begin position="1"/>
        <end position="81"/>
    </location>
</feature>
<feature type="chain" id="PRO_0000034503" description="Tumor necrosis factor ligand superfamily member 6, soluble form" evidence="1">
    <location>
        <begin position="129"/>
        <end position="280"/>
    </location>
</feature>
<feature type="topological domain" description="Cytoplasmic" evidence="4">
    <location>
        <begin position="1"/>
        <end position="80"/>
    </location>
</feature>
<feature type="transmembrane region" description="Helical; Signal-anchor for type II membrane protein" evidence="4">
    <location>
        <begin position="81"/>
        <end position="101"/>
    </location>
</feature>
<feature type="topological domain" description="Extracellular" evidence="4">
    <location>
        <begin position="102"/>
        <end position="280"/>
    </location>
</feature>
<feature type="domain" description="THD" evidence="5">
    <location>
        <begin position="144"/>
        <end position="280"/>
    </location>
</feature>
<feature type="region of interest" description="Disordered" evidence="6">
    <location>
        <begin position="20"/>
        <end position="70"/>
    </location>
</feature>
<feature type="region of interest" description="Disordered" evidence="6">
    <location>
        <begin position="117"/>
        <end position="155"/>
    </location>
</feature>
<feature type="compositionally biased region" description="Pro residues" evidence="6">
    <location>
        <begin position="43"/>
        <end position="69"/>
    </location>
</feature>
<feature type="site" description="Cleavage; by SPPL2A" evidence="1">
    <location>
        <begin position="80"/>
        <end position="81"/>
    </location>
</feature>
<feature type="site" description="Cleavage; by ADAM10" evidence="1">
    <location>
        <begin position="128"/>
        <end position="129"/>
    </location>
</feature>
<feature type="glycosylation site" description="N-linked (GlcNAc...) asparagine" evidence="4">
    <location>
        <position position="183"/>
    </location>
</feature>
<feature type="glycosylation site" description="N-linked (GlcNAc...) asparagine" evidence="4">
    <location>
        <position position="249"/>
    </location>
</feature>
<feature type="glycosylation site" description="N-linked (GlcNAc...) asparagine" evidence="4">
    <location>
        <position position="259"/>
    </location>
</feature>
<feature type="disulfide bond" evidence="5">
    <location>
        <begin position="201"/>
        <end position="232"/>
    </location>
</feature>
<gene>
    <name type="primary">FASLG</name>
    <name type="synonym">CD95L</name>
    <name type="synonym">FASL</name>
    <name type="synonym">TNFSF6</name>
</gene>
<name>TNFL6_MACFA</name>
<protein>
    <recommendedName>
        <fullName>Tumor necrosis factor ligand superfamily member 6</fullName>
    </recommendedName>
    <alternativeName>
        <fullName>CD95 ligand</fullName>
        <shortName>CD95-L</shortName>
    </alternativeName>
    <alternativeName>
        <fullName>Fas antigen ligand</fullName>
        <shortName>Fas ligand</shortName>
        <shortName>FasL</shortName>
    </alternativeName>
    <cdAntigenName>CD178</cdAntigenName>
    <component>
        <recommendedName>
            <fullName>Tumor necrosis factor ligand superfamily member 6, membrane form</fullName>
        </recommendedName>
    </component>
    <component>
        <recommendedName>
            <fullName>Tumor necrosis factor ligand superfamily member 6, soluble form</fullName>
        </recommendedName>
        <alternativeName>
            <fullName>Receptor-binding FasL ectodomain</fullName>
        </alternativeName>
        <alternativeName>
            <fullName>Soluble Fas ligand</fullName>
            <shortName>sFasL</shortName>
        </alternativeName>
    </component>
    <component>
        <recommendedName>
            <fullName>ADAM10-processed FasL form</fullName>
            <shortName>APL</shortName>
        </recommendedName>
    </component>
    <component>
        <recommendedName>
            <fullName>FasL intracellular domain</fullName>
            <shortName>FasL ICD</shortName>
        </recommendedName>
        <alternativeName>
            <fullName>SPPL2A-processed FasL form</fullName>
            <shortName>SPA</shortName>
        </alternativeName>
    </component>
</protein>
<proteinExistence type="evidence at transcript level"/>
<dbReference type="EMBL" id="AB035138">
    <property type="protein sequence ID" value="BAA90294.1"/>
    <property type="molecule type" value="mRNA"/>
</dbReference>
<dbReference type="RefSeq" id="NP_001271479.1">
    <property type="nucleotide sequence ID" value="NM_001284550.1"/>
</dbReference>
<dbReference type="RefSeq" id="XP_045248790.1">
    <property type="nucleotide sequence ID" value="XM_045392855.2"/>
</dbReference>
<dbReference type="SMR" id="P63308"/>
<dbReference type="STRING" id="9541.ENSMFAP00000043926"/>
<dbReference type="GlyCosmos" id="P63308">
    <property type="glycosylation" value="3 sites, No reported glycans"/>
</dbReference>
<dbReference type="Ensembl" id="ENSMFAT00000087924.1">
    <property type="protein sequence ID" value="ENSMFAP00000058325.1"/>
    <property type="gene ID" value="ENSMFAG00000053742.1"/>
</dbReference>
<dbReference type="GeneID" id="102139406"/>
<dbReference type="VEuPathDB" id="HostDB:ENSMFAG00000039338"/>
<dbReference type="eggNOG" id="ENOG502S09I">
    <property type="taxonomic scope" value="Eukaryota"/>
</dbReference>
<dbReference type="GeneTree" id="ENSGT01060000248544"/>
<dbReference type="OMA" id="KVKRSAH"/>
<dbReference type="Proteomes" id="UP000233100">
    <property type="component" value="Chromosome 1"/>
</dbReference>
<dbReference type="GO" id="GO:0060205">
    <property type="term" value="C:cytoplasmic vesicle lumen"/>
    <property type="evidence" value="ECO:0007669"/>
    <property type="project" value="UniProtKB-SubCell"/>
</dbReference>
<dbReference type="GO" id="GO:0009897">
    <property type="term" value="C:external side of plasma membrane"/>
    <property type="evidence" value="ECO:0007669"/>
    <property type="project" value="Ensembl"/>
</dbReference>
<dbReference type="GO" id="GO:0070062">
    <property type="term" value="C:extracellular exosome"/>
    <property type="evidence" value="ECO:0007669"/>
    <property type="project" value="Ensembl"/>
</dbReference>
<dbReference type="GO" id="GO:0043202">
    <property type="term" value="C:lysosomal lumen"/>
    <property type="evidence" value="ECO:0007669"/>
    <property type="project" value="UniProtKB-SubCell"/>
</dbReference>
<dbReference type="GO" id="GO:0005634">
    <property type="term" value="C:nucleus"/>
    <property type="evidence" value="ECO:0000250"/>
    <property type="project" value="UniProtKB"/>
</dbReference>
<dbReference type="GO" id="GO:0005886">
    <property type="term" value="C:plasma membrane"/>
    <property type="evidence" value="ECO:0000250"/>
    <property type="project" value="UniProtKB"/>
</dbReference>
<dbReference type="GO" id="GO:0005125">
    <property type="term" value="F:cytokine activity"/>
    <property type="evidence" value="ECO:0007669"/>
    <property type="project" value="UniProtKB-KW"/>
</dbReference>
<dbReference type="GO" id="GO:0005164">
    <property type="term" value="F:tumor necrosis factor receptor binding"/>
    <property type="evidence" value="ECO:0007669"/>
    <property type="project" value="InterPro"/>
</dbReference>
<dbReference type="GO" id="GO:0008625">
    <property type="term" value="P:extrinsic apoptotic signaling pathway via death domain receptors"/>
    <property type="evidence" value="ECO:0007669"/>
    <property type="project" value="Ensembl"/>
</dbReference>
<dbReference type="GO" id="GO:0006955">
    <property type="term" value="P:immune response"/>
    <property type="evidence" value="ECO:0007669"/>
    <property type="project" value="InterPro"/>
</dbReference>
<dbReference type="GO" id="GO:0097527">
    <property type="term" value="P:necroptotic signaling pathway"/>
    <property type="evidence" value="ECO:0007669"/>
    <property type="project" value="Ensembl"/>
</dbReference>
<dbReference type="GO" id="GO:0016525">
    <property type="term" value="P:negative regulation of angiogenesis"/>
    <property type="evidence" value="ECO:0007669"/>
    <property type="project" value="Ensembl"/>
</dbReference>
<dbReference type="GO" id="GO:0000122">
    <property type="term" value="P:negative regulation of transcription by RNA polymerase II"/>
    <property type="evidence" value="ECO:0000250"/>
    <property type="project" value="UniProtKB"/>
</dbReference>
<dbReference type="GO" id="GO:0043123">
    <property type="term" value="P:positive regulation of canonical NF-kappaB signal transduction"/>
    <property type="evidence" value="ECO:0007669"/>
    <property type="project" value="Ensembl"/>
</dbReference>
<dbReference type="GO" id="GO:2000353">
    <property type="term" value="P:positive regulation of endothelial cell apoptotic process"/>
    <property type="evidence" value="ECO:0007669"/>
    <property type="project" value="Ensembl"/>
</dbReference>
<dbReference type="GO" id="GO:1905782">
    <property type="term" value="P:positive regulation of phosphatidylserine exposure on apoptotic cell surface"/>
    <property type="evidence" value="ECO:0007669"/>
    <property type="project" value="Ensembl"/>
</dbReference>
<dbReference type="GO" id="GO:1903514">
    <property type="term" value="P:release of sequestered calcium ion into cytosol by endoplasmic reticulum"/>
    <property type="evidence" value="ECO:0007669"/>
    <property type="project" value="Ensembl"/>
</dbReference>
<dbReference type="GO" id="GO:0046666">
    <property type="term" value="P:retinal cell programmed cell death"/>
    <property type="evidence" value="ECO:0007669"/>
    <property type="project" value="Ensembl"/>
</dbReference>
<dbReference type="GO" id="GO:0070231">
    <property type="term" value="P:T cell apoptotic process"/>
    <property type="evidence" value="ECO:0007669"/>
    <property type="project" value="Ensembl"/>
</dbReference>
<dbReference type="CDD" id="cd00184">
    <property type="entry name" value="TNF"/>
    <property type="match status" value="1"/>
</dbReference>
<dbReference type="FunFam" id="2.60.120.40:FF:000017">
    <property type="entry name" value="Tumor necrosis factor ligand superfamily member 6"/>
    <property type="match status" value="1"/>
</dbReference>
<dbReference type="Gene3D" id="2.60.120.40">
    <property type="match status" value="1"/>
</dbReference>
<dbReference type="InterPro" id="IPR028326">
    <property type="entry name" value="FASL"/>
</dbReference>
<dbReference type="InterPro" id="IPR006053">
    <property type="entry name" value="TNF"/>
</dbReference>
<dbReference type="InterPro" id="IPR021184">
    <property type="entry name" value="TNF_CS"/>
</dbReference>
<dbReference type="InterPro" id="IPR006052">
    <property type="entry name" value="TNF_dom"/>
</dbReference>
<dbReference type="InterPro" id="IPR008983">
    <property type="entry name" value="Tumour_necrosis_fac-like_dom"/>
</dbReference>
<dbReference type="PANTHER" id="PTHR11471">
    <property type="entry name" value="TUMOR NECROSIS FACTOR FAMILY MEMBER"/>
    <property type="match status" value="1"/>
</dbReference>
<dbReference type="PANTHER" id="PTHR11471:SF33">
    <property type="entry name" value="TUMOR NECROSIS FACTOR LIGAND SUPERFAMILY MEMBER 6"/>
    <property type="match status" value="1"/>
</dbReference>
<dbReference type="Pfam" id="PF00229">
    <property type="entry name" value="TNF"/>
    <property type="match status" value="1"/>
</dbReference>
<dbReference type="PRINTS" id="PR01681">
    <property type="entry name" value="FASLIGAND"/>
</dbReference>
<dbReference type="PRINTS" id="PR01234">
    <property type="entry name" value="TNECROSISFCT"/>
</dbReference>
<dbReference type="SMART" id="SM00207">
    <property type="entry name" value="TNF"/>
    <property type="match status" value="1"/>
</dbReference>
<dbReference type="SUPFAM" id="SSF49842">
    <property type="entry name" value="TNF-like"/>
    <property type="match status" value="1"/>
</dbReference>
<dbReference type="PROSITE" id="PS00251">
    <property type="entry name" value="THD_1"/>
    <property type="match status" value="1"/>
</dbReference>
<dbReference type="PROSITE" id="PS50049">
    <property type="entry name" value="THD_2"/>
    <property type="match status" value="1"/>
</dbReference>
<comment type="function">
    <text evidence="2 3">Cytokine that binds to TNFRSF6/FAS, a receptor that transduces the apoptotic signal into cells. Involved in cytotoxic T-cell-mediated apoptosis, natural killer cell-mediated apoptosis and in T-cell development. Initiates fratricidal/suicidal activation-induced cell death (AICD) in antigen-activated T-cells contributing to the termination of immune responses. TNFRSF6/FAS-mediated apoptosis has also a role in the induction of peripheral tolerance. Binds to TNFRSF6B/DcR3, a decoy receptor that blocks apoptosis.</text>
</comment>
<comment type="function">
    <molecule>Tumor necrosis factor ligand superfamily member 6, soluble form</molecule>
    <text evidence="2">Induces FAS-mediated activation of NF-kappa-B, initiating non-apoptotic signaling pathways. Can induce apoptosis but does not appear to be essential for this process.</text>
</comment>
<comment type="function">
    <molecule>FasL intracellular domain</molecule>
    <text evidence="3">Cytoplasmic form induces gene transcription inhibition.</text>
</comment>
<comment type="subunit">
    <text evidence="3">Homotrimer. Interacts with ARHGAP9, BAIAP2L1, BTK, CACNB3, CACNB4, CRK, DLG2, DNMBP, DOCK4, EPS8L3, FGR, FYB1, FYN, HCK, ITK, ITSN2, KALRN, LYN, MACC1, MIA, MPP4, MYO15A, NCF1, NCK1, NCK2, NCKIPSD, OSTF1, PIK3R1, PSTPIP1, RIMBP3C, SAMSN1, SH3GL3, SH3PXD2B, SH3PXD2A, SH3RF2, SKAP2, SNX33, SNX9, SORBS3, SPTA1, SRC, SRGAP1, SRGAP2, SRGAP3, TEC, TJP3 and YES1.</text>
</comment>
<comment type="subcellular location">
    <subcellularLocation>
        <location evidence="3">Cell membrane</location>
        <topology evidence="4">Single-pass type II membrane protein</topology>
    </subcellularLocation>
    <subcellularLocation>
        <location evidence="3">Cytoplasmic vesicle lumen</location>
    </subcellularLocation>
    <subcellularLocation>
        <location evidence="3">Lysosome lumen</location>
    </subcellularLocation>
    <text evidence="3">Colocalizes with the SPPL2A protease at the cell membrane. Is internalized into multivesicular bodies of secretory lysosomes after phosphorylation by FGR and monoubiquitination.</text>
</comment>
<comment type="subcellular location">
    <molecule>Tumor necrosis factor ligand superfamily member 6, soluble form</molecule>
    <subcellularLocation>
        <location evidence="3">Secreted</location>
    </subcellularLocation>
    <text evidence="3">May be released into the extracellular fluid by cleavage from the cell surface.</text>
</comment>
<comment type="subcellular location">
    <molecule>FasL intracellular domain</molecule>
    <subcellularLocation>
        <location evidence="3">Nucleus</location>
    </subcellularLocation>
    <text evidence="3">The FasL ICD cytoplasmic form is translocated into the nucleus.</text>
</comment>
<comment type="PTM">
    <text evidence="3">The soluble form derives from the membrane form by proteolytic processing. The membrane-bound form undergoes two successive intramembrane proteolytic cleavages. The first one is processed by ADAM10 producing an N-terminal fragment, which lacks the receptor-binding extracellular domain. This ADAM10-processed FasL (FasL APL) remnant form is still membrane anchored and further processed by SPPL2A that liberates the FasL intracellular domain (FasL ICD). FasL shedding by ADAM10 is a prerequisite for subsequent intramembrane cleavage by SPPL2A in T-cells.</text>
</comment>
<comment type="PTM">
    <text evidence="3">Phosphorylated by FGR on tyrosine residues; this is required for ubiquitination and subsequent internalization.</text>
</comment>
<comment type="PTM">
    <text evidence="3">N-glycosylated. Glycosylation enhances apoptotic activity.</text>
</comment>
<comment type="PTM">
    <text evidence="3">Monoubiquitinated.</text>
</comment>
<comment type="similarity">
    <text evidence="7">Belongs to the tumor necrosis factor family.</text>
</comment>
<accession>P63308</accession>
<accession>Q9BDM5</accession>
<accession>Q9MYL6</accession>